<evidence type="ECO:0000255" key="1">
    <source>
        <dbReference type="HAMAP-Rule" id="MF_01855"/>
    </source>
</evidence>
<name>F16PA_HALS3</name>
<dbReference type="EC" id="3.1.3.11" evidence="1"/>
<dbReference type="EMBL" id="AM774415">
    <property type="protein sequence ID" value="CAP13446.1"/>
    <property type="molecule type" value="Genomic_DNA"/>
</dbReference>
<dbReference type="RefSeq" id="WP_010902473.1">
    <property type="nucleotide sequence ID" value="NC_010364.1"/>
</dbReference>
<dbReference type="SMR" id="B0R3Y1"/>
<dbReference type="EnsemblBacteria" id="CAP13446">
    <property type="protein sequence ID" value="CAP13446"/>
    <property type="gene ID" value="OE_2020F"/>
</dbReference>
<dbReference type="KEGG" id="hsl:OE_2020F"/>
<dbReference type="HOGENOM" id="CLU_039977_3_0_2"/>
<dbReference type="PhylomeDB" id="B0R3Y1"/>
<dbReference type="UniPathway" id="UPA00138"/>
<dbReference type="Proteomes" id="UP000001321">
    <property type="component" value="Chromosome"/>
</dbReference>
<dbReference type="GO" id="GO:0005737">
    <property type="term" value="C:cytoplasm"/>
    <property type="evidence" value="ECO:0007669"/>
    <property type="project" value="UniProtKB-SubCell"/>
</dbReference>
<dbReference type="GO" id="GO:0042132">
    <property type="term" value="F:fructose 1,6-bisphosphate 1-phosphatase activity"/>
    <property type="evidence" value="ECO:0007669"/>
    <property type="project" value="UniProtKB-UniRule"/>
</dbReference>
<dbReference type="GO" id="GO:0000287">
    <property type="term" value="F:magnesium ion binding"/>
    <property type="evidence" value="ECO:0007669"/>
    <property type="project" value="UniProtKB-UniRule"/>
</dbReference>
<dbReference type="GO" id="GO:0030388">
    <property type="term" value="P:fructose 1,6-bisphosphate metabolic process"/>
    <property type="evidence" value="ECO:0007669"/>
    <property type="project" value="TreeGrafter"/>
</dbReference>
<dbReference type="GO" id="GO:0006002">
    <property type="term" value="P:fructose 6-phosphate metabolic process"/>
    <property type="evidence" value="ECO:0007669"/>
    <property type="project" value="TreeGrafter"/>
</dbReference>
<dbReference type="GO" id="GO:0006000">
    <property type="term" value="P:fructose metabolic process"/>
    <property type="evidence" value="ECO:0007669"/>
    <property type="project" value="TreeGrafter"/>
</dbReference>
<dbReference type="GO" id="GO:0006094">
    <property type="term" value="P:gluconeogenesis"/>
    <property type="evidence" value="ECO:0007669"/>
    <property type="project" value="UniProtKB-UniRule"/>
</dbReference>
<dbReference type="GO" id="GO:0005986">
    <property type="term" value="P:sucrose biosynthetic process"/>
    <property type="evidence" value="ECO:0007669"/>
    <property type="project" value="TreeGrafter"/>
</dbReference>
<dbReference type="Gene3D" id="3.40.190.80">
    <property type="match status" value="1"/>
</dbReference>
<dbReference type="Gene3D" id="3.30.540.10">
    <property type="entry name" value="Fructose-1,6-Bisphosphatase, subunit A, domain 1"/>
    <property type="match status" value="1"/>
</dbReference>
<dbReference type="HAMAP" id="MF_01855">
    <property type="entry name" value="FBPase_class1"/>
    <property type="match status" value="1"/>
</dbReference>
<dbReference type="InterPro" id="IPR044015">
    <property type="entry name" value="FBPase_C_dom"/>
</dbReference>
<dbReference type="InterPro" id="IPR000146">
    <property type="entry name" value="FBPase_class-1"/>
</dbReference>
<dbReference type="InterPro" id="IPR033391">
    <property type="entry name" value="FBPase_N"/>
</dbReference>
<dbReference type="InterPro" id="IPR028343">
    <property type="entry name" value="FBPtase"/>
</dbReference>
<dbReference type="InterPro" id="IPR023079">
    <property type="entry name" value="SBPase"/>
</dbReference>
<dbReference type="PANTHER" id="PTHR11556">
    <property type="entry name" value="FRUCTOSE-1,6-BISPHOSPHATASE-RELATED"/>
    <property type="match status" value="1"/>
</dbReference>
<dbReference type="PANTHER" id="PTHR11556:SF35">
    <property type="entry name" value="SEDOHEPTULOSE-1,7-BISPHOSPHATASE, CHLOROPLASTIC"/>
    <property type="match status" value="1"/>
</dbReference>
<dbReference type="Pfam" id="PF00316">
    <property type="entry name" value="FBPase"/>
    <property type="match status" value="1"/>
</dbReference>
<dbReference type="Pfam" id="PF18913">
    <property type="entry name" value="FBPase_C"/>
    <property type="match status" value="1"/>
</dbReference>
<dbReference type="PIRSF" id="PIRSF500210">
    <property type="entry name" value="FBPtase"/>
    <property type="match status" value="1"/>
</dbReference>
<dbReference type="PIRSF" id="PIRSF000904">
    <property type="entry name" value="FBPtase_SBPase"/>
    <property type="match status" value="1"/>
</dbReference>
<dbReference type="PRINTS" id="PR01958">
    <property type="entry name" value="S17BPHPHTASE"/>
</dbReference>
<dbReference type="SUPFAM" id="SSF56655">
    <property type="entry name" value="Carbohydrate phosphatase"/>
    <property type="match status" value="1"/>
</dbReference>
<keyword id="KW-0119">Carbohydrate metabolism</keyword>
<keyword id="KW-0963">Cytoplasm</keyword>
<keyword id="KW-0378">Hydrolase</keyword>
<keyword id="KW-0460">Magnesium</keyword>
<keyword id="KW-0479">Metal-binding</keyword>
<feature type="chain" id="PRO_0000364771" description="Fructose-1,6-bisphosphatase class 1">
    <location>
        <begin position="1"/>
        <end position="287"/>
    </location>
</feature>
<feature type="binding site" evidence="1">
    <location>
        <position position="67"/>
    </location>
    <ligand>
        <name>Mg(2+)</name>
        <dbReference type="ChEBI" id="CHEBI:18420"/>
        <label>1</label>
    </ligand>
</feature>
<feature type="binding site" evidence="1">
    <location>
        <position position="87"/>
    </location>
    <ligand>
        <name>Mg(2+)</name>
        <dbReference type="ChEBI" id="CHEBI:18420"/>
        <label>1</label>
    </ligand>
</feature>
<feature type="binding site" evidence="1">
    <location>
        <position position="87"/>
    </location>
    <ligand>
        <name>Mg(2+)</name>
        <dbReference type="ChEBI" id="CHEBI:18420"/>
        <label>2</label>
    </ligand>
</feature>
<feature type="binding site" evidence="1">
    <location>
        <position position="89"/>
    </location>
    <ligand>
        <name>Mg(2+)</name>
        <dbReference type="ChEBI" id="CHEBI:18420"/>
        <label>1</label>
    </ligand>
</feature>
<feature type="binding site" evidence="1">
    <location>
        <begin position="90"/>
        <end position="93"/>
    </location>
    <ligand>
        <name>substrate</name>
    </ligand>
</feature>
<feature type="binding site" evidence="1">
    <location>
        <position position="90"/>
    </location>
    <ligand>
        <name>Mg(2+)</name>
        <dbReference type="ChEBI" id="CHEBI:18420"/>
        <label>2</label>
    </ligand>
</feature>
<feature type="binding site" evidence="1">
    <location>
        <position position="195"/>
    </location>
    <ligand>
        <name>substrate</name>
    </ligand>
</feature>
<feature type="binding site" evidence="1">
    <location>
        <position position="225"/>
    </location>
    <ligand>
        <name>substrate</name>
    </ligand>
</feature>
<feature type="binding site" evidence="1">
    <location>
        <position position="231"/>
    </location>
    <ligand>
        <name>Mg(2+)</name>
        <dbReference type="ChEBI" id="CHEBI:18420"/>
        <label>2</label>
    </ligand>
</feature>
<protein>
    <recommendedName>
        <fullName evidence="1">Fructose-1,6-bisphosphatase class 1</fullName>
        <shortName evidence="1">FBPase class 1</shortName>
        <ecNumber evidence="1">3.1.3.11</ecNumber>
    </recommendedName>
    <alternativeName>
        <fullName evidence="1">D-fructose-1,6-bisphosphate 1-phosphohydrolase class 1</fullName>
    </alternativeName>
</protein>
<accession>B0R3Y1</accession>
<proteinExistence type="inferred from homology"/>
<reference key="1">
    <citation type="journal article" date="2008" name="Genomics">
        <title>Evolution in the laboratory: the genome of Halobacterium salinarum strain R1 compared to that of strain NRC-1.</title>
        <authorList>
            <person name="Pfeiffer F."/>
            <person name="Schuster S.C."/>
            <person name="Broicher A."/>
            <person name="Falb M."/>
            <person name="Palm P."/>
            <person name="Rodewald K."/>
            <person name="Ruepp A."/>
            <person name="Soppa J."/>
            <person name="Tittor J."/>
            <person name="Oesterhelt D."/>
        </authorList>
    </citation>
    <scope>NUCLEOTIDE SEQUENCE [LARGE SCALE GENOMIC DNA]</scope>
    <source>
        <strain>ATCC 29341 / DSM 671 / R1</strain>
    </source>
</reference>
<sequence length="287" mass="30154">MADVIDAVFDAIADAAPEVRAGLPDHRATRDDQNASGDTQLEADVWADDLLFDRTESIEGVNWYASEERDAVVTVGDAEGGYAVALDPLDGSSNVKSNNPCGTVVGIYDQPLPAPGSSLVAAGFVLYGPTTTMVVARDDTVRESLVSETGATTDLGPVELPADPTVYGFGGRVPDWTPAFESFVRDVEDDLKLRYGGAMIADVNQVLVYGGVFGYPGMESAPDGKLRAQFEALPIAYIVETAGGASSDGTQSLLDVAPTRLHERTPTFVGTDDVIAALDAALPDHTN</sequence>
<comment type="catalytic activity">
    <reaction evidence="1">
        <text>beta-D-fructose 1,6-bisphosphate + H2O = beta-D-fructose 6-phosphate + phosphate</text>
        <dbReference type="Rhea" id="RHEA:11064"/>
        <dbReference type="ChEBI" id="CHEBI:15377"/>
        <dbReference type="ChEBI" id="CHEBI:32966"/>
        <dbReference type="ChEBI" id="CHEBI:43474"/>
        <dbReference type="ChEBI" id="CHEBI:57634"/>
        <dbReference type="EC" id="3.1.3.11"/>
    </reaction>
</comment>
<comment type="cofactor">
    <cofactor evidence="1">
        <name>Mg(2+)</name>
        <dbReference type="ChEBI" id="CHEBI:18420"/>
    </cofactor>
    <text evidence="1">Binds 2 magnesium ions per subunit.</text>
</comment>
<comment type="pathway">
    <text evidence="1">Carbohydrate biosynthesis; gluconeogenesis.</text>
</comment>
<comment type="subunit">
    <text evidence="1">Homotetramer.</text>
</comment>
<comment type="subcellular location">
    <subcellularLocation>
        <location evidence="1">Cytoplasm</location>
    </subcellularLocation>
</comment>
<comment type="similarity">
    <text evidence="1">Belongs to the FBPase class 1 family.</text>
</comment>
<organism>
    <name type="scientific">Halobacterium salinarum (strain ATCC 29341 / DSM 671 / R1)</name>
    <dbReference type="NCBI Taxonomy" id="478009"/>
    <lineage>
        <taxon>Archaea</taxon>
        <taxon>Methanobacteriati</taxon>
        <taxon>Methanobacteriota</taxon>
        <taxon>Stenosarchaea group</taxon>
        <taxon>Halobacteria</taxon>
        <taxon>Halobacteriales</taxon>
        <taxon>Halobacteriaceae</taxon>
        <taxon>Halobacterium</taxon>
        <taxon>Halobacterium salinarum NRC-34001</taxon>
    </lineage>
</organism>
<gene>
    <name evidence="1" type="primary">fbp</name>
    <name type="ordered locus">OE_2020F</name>
</gene>